<feature type="chain" id="PRO_0000142861" description="Major surface glycoprotein G">
    <location>
        <begin position="1"/>
        <end position="298"/>
    </location>
</feature>
<feature type="chain" id="PRO_0000451330" description="Mature secreted glycoprotein G" evidence="1">
    <location>
        <begin position="66"/>
        <end position="298"/>
    </location>
</feature>
<feature type="topological domain" description="Cytoplasmic" evidence="3">
    <location>
        <begin position="1"/>
        <end position="37"/>
    </location>
</feature>
<feature type="transmembrane region" description="Helical" evidence="3">
    <location>
        <begin position="38"/>
        <end position="66"/>
    </location>
</feature>
<feature type="topological domain" description="Extracellular" evidence="3">
    <location>
        <begin position="67"/>
        <end position="298"/>
    </location>
</feature>
<feature type="region of interest" description="Disordered" evidence="4">
    <location>
        <begin position="132"/>
        <end position="161"/>
    </location>
</feature>
<feature type="region of interest" description="Binding to host heparan sulfate" evidence="1">
    <location>
        <begin position="187"/>
        <end position="198"/>
    </location>
</feature>
<feature type="region of interest" description="Disordered" evidence="4">
    <location>
        <begin position="192"/>
        <end position="298"/>
    </location>
</feature>
<feature type="compositionally biased region" description="Polar residues" evidence="4">
    <location>
        <begin position="140"/>
        <end position="150"/>
    </location>
</feature>
<feature type="compositionally biased region" description="Basic residues" evidence="4">
    <location>
        <begin position="192"/>
        <end position="215"/>
    </location>
</feature>
<feature type="compositionally biased region" description="Basic and acidic residues" evidence="4">
    <location>
        <begin position="221"/>
        <end position="232"/>
    </location>
</feature>
<feature type="compositionally biased region" description="Low complexity" evidence="4">
    <location>
        <begin position="242"/>
        <end position="256"/>
    </location>
</feature>
<feature type="compositionally biased region" description="Polar residues" evidence="4">
    <location>
        <begin position="266"/>
        <end position="298"/>
    </location>
</feature>
<feature type="site" description="Cleavage" evidence="1">
    <location>
        <begin position="65"/>
        <end position="66"/>
    </location>
</feature>
<feature type="glycosylation site" description="O-linked (GalNAc...) threonine; by host" evidence="1">
    <location>
        <position position="70"/>
    </location>
</feature>
<feature type="glycosylation site" description="O-linked (GalNAc...) threonine; by host" evidence="1">
    <location>
        <position position="72"/>
    </location>
</feature>
<feature type="glycosylation site" description="O-linked (GalNAc...) threonine; by host" evidence="1">
    <location>
        <position position="80"/>
    </location>
</feature>
<feature type="glycosylation site" description="O-linked (GalNAc...) threonine; by host" evidence="1">
    <location>
        <position position="86"/>
    </location>
</feature>
<feature type="glycosylation site" description="O-linked (GalNAc...) threonine; by host" evidence="1">
    <location>
        <position position="87"/>
    </location>
</feature>
<feature type="glycosylation site" description="O-linked (GalNAc...) threonine; by host" evidence="1">
    <location>
        <position position="92"/>
    </location>
</feature>
<feature type="glycosylation site" description="O-linked (GalNAc...) serine; by host" evidence="3">
    <location>
        <position position="100"/>
    </location>
</feature>
<feature type="glycosylation site" description="N-linked (GlcNAc...) asparagine; by host" evidence="3">
    <location>
        <position position="103"/>
    </location>
</feature>
<feature type="glycosylation site" description="O-linked (GalNAc...) serine; by host" evidence="3">
    <location>
        <position position="105"/>
    </location>
</feature>
<feature type="glycosylation site" description="O-linked (GalNAc...) threonine; by host" evidence="3">
    <location>
        <position position="119"/>
    </location>
</feature>
<feature type="glycosylation site" description="N-linked (GlcNAc...) asparagine; by host" evidence="3">
    <location>
        <position position="135"/>
    </location>
</feature>
<feature type="glycosylation site" description="O-linked (GalNAc...) threonine; by host" evidence="3">
    <location>
        <position position="137"/>
    </location>
</feature>
<feature type="glycosylation site" description="O-linked (GalNAc...) threonine; by host" evidence="3">
    <location>
        <position position="138"/>
    </location>
</feature>
<feature type="glycosylation site" description="O-linked (GalNAc...) threonine; by host" evidence="3">
    <location>
        <position position="139"/>
    </location>
</feature>
<feature type="glycosylation site" description="O-linked (GalNAc...) serine; by host" evidence="3">
    <location>
        <position position="144"/>
    </location>
</feature>
<feature type="glycosylation site" description="O-linked (GalNAc...) threonine; by host" evidence="3">
    <location>
        <position position="147"/>
    </location>
</feature>
<feature type="glycosylation site" description="O-linked (GalNAc...) threonine; by host" evidence="3">
    <location>
        <position position="199"/>
    </location>
</feature>
<feature type="glycosylation site" description="O-linked (GalNAc...) threonine; by host" evidence="3">
    <location>
        <position position="203"/>
    </location>
</feature>
<feature type="glycosylation site" description="O-linked (GalNAc...) threonine; by host" evidence="3">
    <location>
        <position position="219"/>
    </location>
</feature>
<feature type="glycosylation site" description="O-linked (GalNAc...) threonine; by host" evidence="3">
    <location>
        <position position="231"/>
    </location>
</feature>
<feature type="glycosylation site" description="O-linked (GalNAc...) threonine; by host" evidence="3">
    <location>
        <position position="235"/>
    </location>
</feature>
<feature type="glycosylation site" description="N-linked (GlcNAc...) asparagine; by host" evidence="3">
    <location>
        <position position="237"/>
    </location>
</feature>
<feature type="glycosylation site" description="N-linked (GlcNAc...) asparagine; by host" evidence="3">
    <location>
        <position position="250"/>
    </location>
</feature>
<feature type="glycosylation site" description="O-linked (GalNAc...) threonine; by host" evidence="3">
    <location>
        <position position="253"/>
    </location>
</feature>
<feature type="glycosylation site" description="O-linked (GalNAc...) serine; by host" evidence="3">
    <location>
        <position position="269"/>
    </location>
</feature>
<feature type="glycosylation site" description="O-linked (GlcNAc...) serine; by host" evidence="3">
    <location>
        <position position="270"/>
    </location>
</feature>
<feature type="glycosylation site" description="O-linked (GalNAc...) serine; by host" evidence="3">
    <location>
        <position position="275"/>
    </location>
</feature>
<feature type="glycosylation site" description="O-linked (GalNAc...) threonine; by host" evidence="3">
    <location>
        <position position="282"/>
    </location>
</feature>
<feature type="glycosylation site" description="O-linked (GalNAc...) serine; by host" evidence="3">
    <location>
        <position position="283"/>
    </location>
</feature>
<feature type="glycosylation site" description="O-linked (GalNAc...) serine; by host" evidence="3">
    <location>
        <position position="287"/>
    </location>
</feature>
<feature type="glycosylation site" description="N-linked (GlcNAc...) asparagine; by host" evidence="3">
    <location>
        <position position="294"/>
    </location>
</feature>
<feature type="disulfide bond" evidence="1">
    <location>
        <begin position="173"/>
        <end position="186"/>
    </location>
</feature>
<feature type="disulfide bond" evidence="1">
    <location>
        <begin position="176"/>
        <end position="182"/>
    </location>
</feature>
<feature type="splice variant" id="VSP_036529" description="In isoform Secreted glycoprotein G." evidence="1">
    <location>
        <begin position="1"/>
        <end position="47"/>
    </location>
</feature>
<keyword id="KW-0024">Alternative initiation</keyword>
<keyword id="KW-1015">Disulfide bond</keyword>
<keyword id="KW-0325">Glycoprotein</keyword>
<keyword id="KW-1032">Host cell membrane</keyword>
<keyword id="KW-1043">Host membrane</keyword>
<keyword id="KW-0945">Host-virus interaction</keyword>
<keyword id="KW-0472">Membrane</keyword>
<keyword id="KW-0964">Secreted</keyword>
<keyword id="KW-0812">Transmembrane</keyword>
<keyword id="KW-1133">Transmembrane helix</keyword>
<keyword id="KW-1161">Viral attachment to host cell</keyword>
<keyword id="KW-0899">Viral immunoevasion</keyword>
<keyword id="KW-0946">Virion</keyword>
<keyword id="KW-1160">Virus entry into host cell</keyword>
<proteinExistence type="inferred from homology"/>
<gene>
    <name type="primary">G</name>
</gene>
<comment type="function">
    <molecule>Isoform Membrane-bound glycoprotein G</molecule>
    <text evidence="1">Attaches the virion to the host cell membrane by interacting with heparan sulfate, initiating the infection. Interacts with host CX3CR1, the receptor for the CX3C chemokine fractalkine, to modulate the immune response and facilitate infection. Unlike the other paramyxovirus attachment proteins, lacks both neuraminidase and hemagglutinating activities.</text>
</comment>
<comment type="function">
    <molecule>Isoform Secreted glycoprotein G</molecule>
    <text evidence="1">Helps the virus escape antibody-dependent restriction of replication by acting as an antigen decoy and by modulating the activity of leukocytes bearing Fc-gamma receptors.</text>
</comment>
<comment type="subunit">
    <molecule>Isoform Membrane-bound glycoprotein G</molecule>
    <text evidence="1">Homooligomer. Interacts (via N-terminus) with protein M. Part of a complex composed of F1, F2 and G glycoproteins. Interacts with protein SH. Interacts with host heparate sulfate; this interaction probably participates in the viral attachment to the host cell. Interacts with host CX3CR1; this interaction plays an important role in viral entry. Interacts with the host lectins CD209/DC-SIGN and CD209L/L-SIGN on dendritic cells; these interactions stimulate the phosphorylation of MAPK3/ERK1 and MAPK1/ERK2, which inhibits dendritic cell activation and could participate in the limited immunity against RSV reinfection.</text>
</comment>
<comment type="subcellular location">
    <molecule>Isoform Membrane-bound glycoprotein G</molecule>
    <subcellularLocation>
        <location evidence="1">Virion membrane</location>
        <topology evidence="1">Single-pass type II membrane protein</topology>
    </subcellularLocation>
    <subcellularLocation>
        <location evidence="1">Host cell membrane</location>
        <topology evidence="1">Single-pass type II membrane protein</topology>
    </subcellularLocation>
</comment>
<comment type="subcellular location">
    <molecule>Isoform Secreted glycoprotein G</molecule>
    <subcellularLocation>
        <location evidence="2">Secreted</location>
    </subcellularLocation>
    <text evidence="2">The protein is shed from infected cells before the appearance of progeny virus. The initiation at the downstream methionine removes a portion of the transmembrane domain. The remaining hydrophobic portion of the sG protein is essential for translocating it into the lumen of the ER during translation and would likely maintain its membrane association until a proteolytic event releases the mature sG protein into the medium.</text>
</comment>
<comment type="alternative products">
    <event type="alternative initiation"/>
    <isoform>
        <id>P27024-1</id>
        <name>Membrane-bound glycoprotein G</name>
        <sequence type="displayed"/>
    </isoform>
    <isoform>
        <id>P27024-2</id>
        <name>Secreted glycoprotein G</name>
        <sequence type="described" ref="VSP_036529"/>
    </isoform>
</comment>
<comment type="domain">
    <molecule>Isoform Membrane-bound glycoprotein G</molecule>
    <text evidence="1">Contains a linear heparin binding domain essential for virus attachment to the host.</text>
</comment>
<comment type="PTM">
    <molecule>Isoform Secreted glycoprotein G</molecule>
    <text evidence="2">Cleaved to give rise to the mature sG protein which lacks the transmembrane domain.</text>
</comment>
<comment type="PTM">
    <molecule>Isoform Membrane-bound glycoprotein G</molecule>
    <text evidence="1">N- and O-glycosylated. May carry 30-40 separate O-linked carbohydrate chains distributed among the 91 serine and threonine residues.</text>
</comment>
<comment type="PTM">
    <molecule>Isoform Membrane-bound glycoprotein G</molecule>
    <text evidence="1">Palmitoylated.</text>
</comment>
<comment type="similarity">
    <text evidence="5">Belongs to the pneumoviruses glycoprotein G family.</text>
</comment>
<organism>
    <name type="scientific">Human respiratory syncytial virus A (strain rsb6190)</name>
    <dbReference type="NCBI Taxonomy" id="11255"/>
    <lineage>
        <taxon>Viruses</taxon>
        <taxon>Riboviria</taxon>
        <taxon>Orthornavirae</taxon>
        <taxon>Negarnaviricota</taxon>
        <taxon>Haploviricotina</taxon>
        <taxon>Monjiviricetes</taxon>
        <taxon>Mononegavirales</taxon>
        <taxon>Pneumoviridae</taxon>
        <taxon>Orthopneumovirus</taxon>
        <taxon>Orthopneumovirus hominis</taxon>
    </lineage>
</organism>
<name>GLYC_HRSV5</name>
<protein>
    <recommendedName>
        <fullName>Major surface glycoprotein G</fullName>
    </recommendedName>
    <alternativeName>
        <fullName>Attachment glycoprotein G</fullName>
    </alternativeName>
    <alternativeName>
        <fullName>Membrane-bound glycoprotein</fullName>
        <shortName>mG</shortName>
    </alternativeName>
    <component>
        <recommendedName>
            <fullName evidence="2">Mature secreted glycoprotein G</fullName>
            <shortName evidence="2">Mature sG</shortName>
        </recommendedName>
    </component>
</protein>
<accession>P27024</accession>
<dbReference type="PIR" id="JQ1207">
    <property type="entry name" value="JQ1207"/>
</dbReference>
<dbReference type="SMR" id="P27024"/>
<dbReference type="GlyCosmos" id="P27024">
    <property type="glycosylation" value="31 sites, No reported glycans"/>
</dbReference>
<dbReference type="GO" id="GO:0005576">
    <property type="term" value="C:extracellular region"/>
    <property type="evidence" value="ECO:0007669"/>
    <property type="project" value="UniProtKB-SubCell"/>
</dbReference>
<dbReference type="GO" id="GO:0020002">
    <property type="term" value="C:host cell plasma membrane"/>
    <property type="evidence" value="ECO:0007669"/>
    <property type="project" value="UniProtKB-SubCell"/>
</dbReference>
<dbReference type="GO" id="GO:0016020">
    <property type="term" value="C:membrane"/>
    <property type="evidence" value="ECO:0007669"/>
    <property type="project" value="UniProtKB-KW"/>
</dbReference>
<dbReference type="GO" id="GO:0055036">
    <property type="term" value="C:virion membrane"/>
    <property type="evidence" value="ECO:0007669"/>
    <property type="project" value="UniProtKB-SubCell"/>
</dbReference>
<dbReference type="GO" id="GO:0046718">
    <property type="term" value="P:symbiont entry into host cell"/>
    <property type="evidence" value="ECO:0007669"/>
    <property type="project" value="UniProtKB-KW"/>
</dbReference>
<dbReference type="GO" id="GO:0019062">
    <property type="term" value="P:virion attachment to host cell"/>
    <property type="evidence" value="ECO:0007669"/>
    <property type="project" value="UniProtKB-KW"/>
</dbReference>
<dbReference type="InterPro" id="IPR000925">
    <property type="entry name" value="G_prot"/>
</dbReference>
<dbReference type="Pfam" id="PF00802">
    <property type="entry name" value="Glycoprotein_G"/>
    <property type="match status" value="1"/>
</dbReference>
<organismHost>
    <name type="scientific">Homo sapiens</name>
    <name type="common">Human</name>
    <dbReference type="NCBI Taxonomy" id="9606"/>
</organismHost>
<evidence type="ECO:0000250" key="1">
    <source>
        <dbReference type="UniProtKB" id="P03423"/>
    </source>
</evidence>
<evidence type="ECO:0000250" key="2">
    <source>
        <dbReference type="UniProtKB" id="P20895"/>
    </source>
</evidence>
<evidence type="ECO:0000255" key="3"/>
<evidence type="ECO:0000256" key="4">
    <source>
        <dbReference type="SAM" id="MobiDB-lite"/>
    </source>
</evidence>
<evidence type="ECO:0000305" key="5"/>
<reference key="1">
    <citation type="journal article" date="1991" name="J. Gen. Virol.">
        <title>Identification of variable domains of the attachment (G) protein of subgroup A respiratory syncytial viruses.</title>
        <authorList>
            <person name="Cane P.A."/>
            <person name="Matthews D.A."/>
            <person name="Pringle C.R."/>
        </authorList>
    </citation>
    <scope>NUCLEOTIDE SEQUENCE</scope>
</reference>
<sequence>MSKTKDQRTAKTLEKTWDTLNHLLFISSCLYKLNLKSIAQITLSILAMIISTSLIIAAIIFIASANNKVTLTTAIIQDATSQIKNTTPTYLTQNPQLGISFFNLSGTTSQTTAILALTTPSVESILQSTTVKTKNTTTTQIQPSKPTTKQRQNKPPNKPNNDFHFEVFNFVPCSICSNNPTCWAICKRIPSKKPGKKTTTKPTKKPTIKTTKKDHKPQTTKPKEAPSTKPTEKPTINITKPNIRTTLLTNSTTGNLEHTSQEETLHSTSSEGNTSPSQVYTTSEYLSQPTSPSNITNQ</sequence>